<evidence type="ECO:0000255" key="1">
    <source>
        <dbReference type="HAMAP-Rule" id="MF_00154"/>
    </source>
</evidence>
<feature type="chain" id="PRO_0000327030" description="Protoheme IX farnesyltransferase">
    <location>
        <begin position="1"/>
        <end position="300"/>
    </location>
</feature>
<feature type="transmembrane region" description="Helical" evidence="1">
    <location>
        <begin position="24"/>
        <end position="44"/>
    </location>
</feature>
<feature type="transmembrane region" description="Helical" evidence="1">
    <location>
        <begin position="48"/>
        <end position="68"/>
    </location>
</feature>
<feature type="transmembrane region" description="Helical" evidence="1">
    <location>
        <begin position="94"/>
        <end position="114"/>
    </location>
</feature>
<feature type="transmembrane region" description="Helical" evidence="1">
    <location>
        <begin position="118"/>
        <end position="138"/>
    </location>
</feature>
<feature type="transmembrane region" description="Helical" evidence="1">
    <location>
        <begin position="146"/>
        <end position="166"/>
    </location>
</feature>
<feature type="transmembrane region" description="Helical" evidence="1">
    <location>
        <begin position="172"/>
        <end position="192"/>
    </location>
</feature>
<feature type="transmembrane region" description="Helical" evidence="1">
    <location>
        <begin position="217"/>
        <end position="237"/>
    </location>
</feature>
<feature type="transmembrane region" description="Helical" evidence="1">
    <location>
        <begin position="239"/>
        <end position="259"/>
    </location>
</feature>
<feature type="transmembrane region" description="Helical" evidence="1">
    <location>
        <begin position="278"/>
        <end position="298"/>
    </location>
</feature>
<sequence length="300" mass="32874">MDTTLSHTPGSRLSQYLALTKPRVTQLAVFCAVIGMFLATPGMVPWKVLLGGTIGIGLLAGSAFAINCLVEQKIDAMMRRTAWRPSARGEITTLQILAFSTVLGGLGAWTLYTFTNPLTMWLTIATFVGYAVIYTLLLKPMTPQNIVIGGASGAMPPALGWAAVTGAVPGDAWILVLIIFVWTPPHFWVLALYRRKDYENAGLPMLPVTHGEQFTRLHILLYTVILFAVTMMPFISGMSGAVYLTSAVLLGALFLAYAWKIYRDYSDALARRAFRYSIVYLSLLFAALLVDHYARPVIGM</sequence>
<gene>
    <name evidence="1" type="primary">ctaB</name>
    <name type="ordered locus">BURPS1710b_0682</name>
</gene>
<comment type="function">
    <text evidence="1">Converts heme B (protoheme IX) to heme O by substitution of the vinyl group on carbon 2 of heme B porphyrin ring with a hydroxyethyl farnesyl side group.</text>
</comment>
<comment type="catalytic activity">
    <reaction evidence="1">
        <text>heme b + (2E,6E)-farnesyl diphosphate + H2O = Fe(II)-heme o + diphosphate</text>
        <dbReference type="Rhea" id="RHEA:28070"/>
        <dbReference type="ChEBI" id="CHEBI:15377"/>
        <dbReference type="ChEBI" id="CHEBI:33019"/>
        <dbReference type="ChEBI" id="CHEBI:60344"/>
        <dbReference type="ChEBI" id="CHEBI:60530"/>
        <dbReference type="ChEBI" id="CHEBI:175763"/>
        <dbReference type="EC" id="2.5.1.141"/>
    </reaction>
</comment>
<comment type="pathway">
    <text evidence="1">Porphyrin-containing compound metabolism; heme O biosynthesis; heme O from protoheme: step 1/1.</text>
</comment>
<comment type="subcellular location">
    <subcellularLocation>
        <location evidence="1">Cell inner membrane</location>
        <topology evidence="1">Multi-pass membrane protein</topology>
    </subcellularLocation>
</comment>
<comment type="miscellaneous">
    <text evidence="1">Carbon 2 of the heme B porphyrin ring is defined according to the Fischer nomenclature.</text>
</comment>
<comment type="similarity">
    <text evidence="1">Belongs to the UbiA prenyltransferase family. Protoheme IX farnesyltransferase subfamily.</text>
</comment>
<reference key="1">
    <citation type="journal article" date="2010" name="Genome Biol. Evol.">
        <title>Continuing evolution of Burkholderia mallei through genome reduction and large-scale rearrangements.</title>
        <authorList>
            <person name="Losada L."/>
            <person name="Ronning C.M."/>
            <person name="DeShazer D."/>
            <person name="Woods D."/>
            <person name="Fedorova N."/>
            <person name="Kim H.S."/>
            <person name="Shabalina S.A."/>
            <person name="Pearson T.R."/>
            <person name="Brinkac L."/>
            <person name="Tan P."/>
            <person name="Nandi T."/>
            <person name="Crabtree J."/>
            <person name="Badger J."/>
            <person name="Beckstrom-Sternberg S."/>
            <person name="Saqib M."/>
            <person name="Schutzer S.E."/>
            <person name="Keim P."/>
            <person name="Nierman W.C."/>
        </authorList>
    </citation>
    <scope>NUCLEOTIDE SEQUENCE [LARGE SCALE GENOMIC DNA]</scope>
    <source>
        <strain>1710b</strain>
    </source>
</reference>
<proteinExistence type="inferred from homology"/>
<organism>
    <name type="scientific">Burkholderia pseudomallei (strain 1710b)</name>
    <dbReference type="NCBI Taxonomy" id="320372"/>
    <lineage>
        <taxon>Bacteria</taxon>
        <taxon>Pseudomonadati</taxon>
        <taxon>Pseudomonadota</taxon>
        <taxon>Betaproteobacteria</taxon>
        <taxon>Burkholderiales</taxon>
        <taxon>Burkholderiaceae</taxon>
        <taxon>Burkholderia</taxon>
        <taxon>pseudomallei group</taxon>
    </lineage>
</organism>
<dbReference type="EC" id="2.5.1.141" evidence="1"/>
<dbReference type="EMBL" id="CP000124">
    <property type="protein sequence ID" value="ABA48746.1"/>
    <property type="molecule type" value="Genomic_DNA"/>
</dbReference>
<dbReference type="SMR" id="Q3JWF7"/>
<dbReference type="EnsemblBacteria" id="ABA48746">
    <property type="protein sequence ID" value="ABA48746"/>
    <property type="gene ID" value="BURPS1710b_0682"/>
</dbReference>
<dbReference type="KEGG" id="bpm:BURPS1710b_0682"/>
<dbReference type="HOGENOM" id="CLU_029631_0_2_4"/>
<dbReference type="UniPathway" id="UPA00834">
    <property type="reaction ID" value="UER00712"/>
</dbReference>
<dbReference type="Proteomes" id="UP000002700">
    <property type="component" value="Chromosome I"/>
</dbReference>
<dbReference type="GO" id="GO:0005886">
    <property type="term" value="C:plasma membrane"/>
    <property type="evidence" value="ECO:0007669"/>
    <property type="project" value="UniProtKB-SubCell"/>
</dbReference>
<dbReference type="GO" id="GO:0008495">
    <property type="term" value="F:protoheme IX farnesyltransferase activity"/>
    <property type="evidence" value="ECO:0007669"/>
    <property type="project" value="UniProtKB-UniRule"/>
</dbReference>
<dbReference type="GO" id="GO:0048034">
    <property type="term" value="P:heme O biosynthetic process"/>
    <property type="evidence" value="ECO:0007669"/>
    <property type="project" value="UniProtKB-UniRule"/>
</dbReference>
<dbReference type="CDD" id="cd13957">
    <property type="entry name" value="PT_UbiA_Cox10"/>
    <property type="match status" value="1"/>
</dbReference>
<dbReference type="Gene3D" id="1.10.357.140">
    <property type="entry name" value="UbiA prenyltransferase"/>
    <property type="match status" value="1"/>
</dbReference>
<dbReference type="HAMAP" id="MF_00154">
    <property type="entry name" value="CyoE_CtaB"/>
    <property type="match status" value="1"/>
</dbReference>
<dbReference type="InterPro" id="IPR006369">
    <property type="entry name" value="Protohaem_IX_farnesylTrfase"/>
</dbReference>
<dbReference type="InterPro" id="IPR000537">
    <property type="entry name" value="UbiA_prenyltransferase"/>
</dbReference>
<dbReference type="InterPro" id="IPR030470">
    <property type="entry name" value="UbiA_prenylTrfase_CS"/>
</dbReference>
<dbReference type="InterPro" id="IPR044878">
    <property type="entry name" value="UbiA_sf"/>
</dbReference>
<dbReference type="NCBIfam" id="TIGR01473">
    <property type="entry name" value="cyoE_ctaB"/>
    <property type="match status" value="1"/>
</dbReference>
<dbReference type="NCBIfam" id="NF003349">
    <property type="entry name" value="PRK04375.1-2"/>
    <property type="match status" value="1"/>
</dbReference>
<dbReference type="PANTHER" id="PTHR43448:SF7">
    <property type="entry name" value="4-HYDROXYBENZOATE SOLANESYLTRANSFERASE"/>
    <property type="match status" value="1"/>
</dbReference>
<dbReference type="PANTHER" id="PTHR43448">
    <property type="entry name" value="PROTOHEME IX FARNESYLTRANSFERASE, MITOCHONDRIAL"/>
    <property type="match status" value="1"/>
</dbReference>
<dbReference type="Pfam" id="PF01040">
    <property type="entry name" value="UbiA"/>
    <property type="match status" value="1"/>
</dbReference>
<dbReference type="PROSITE" id="PS00943">
    <property type="entry name" value="UBIA"/>
    <property type="match status" value="1"/>
</dbReference>
<protein>
    <recommendedName>
        <fullName evidence="1">Protoheme IX farnesyltransferase</fullName>
        <ecNumber evidence="1">2.5.1.141</ecNumber>
    </recommendedName>
    <alternativeName>
        <fullName evidence="1">Heme B farnesyltransferase</fullName>
    </alternativeName>
    <alternativeName>
        <fullName evidence="1">Heme O synthase</fullName>
    </alternativeName>
</protein>
<keyword id="KW-0997">Cell inner membrane</keyword>
<keyword id="KW-1003">Cell membrane</keyword>
<keyword id="KW-0350">Heme biosynthesis</keyword>
<keyword id="KW-0472">Membrane</keyword>
<keyword id="KW-0808">Transferase</keyword>
<keyword id="KW-0812">Transmembrane</keyword>
<keyword id="KW-1133">Transmembrane helix</keyword>
<accession>Q3JWF7</accession>
<name>COXX_BURP1</name>